<sequence length="256" mass="28533">MNNIWWQTKGQGNVHLVLLHGWGLNAEVWRCIDEELSSHFTLHLVDLPGFGRSRGFGALSLADMAEAVLQQAPDKAIWLGWSLGGLVASQIALTHPERVQALVTVASSPCFSARDEWPGIKPDVLAGFQQQLSDDFQRTVERFLALQTMGTETARQDARALKKTVLALPMPEVDVLNGGLEILKTVDLRQPLQNVSMPFLRLYGYLDGLVPRKVVPMLDKLWPHSESYIFAKAAHAPFISHPVEFCHLLVALKQRV</sequence>
<comment type="function">
    <text evidence="2">The physiological role of BioH is to remove the methyl group introduced by BioC when the pimeloyl moiety is complete. It allows to synthesize pimeloyl-ACP via the fatty acid synthetic pathway through the hydrolysis of the ester bonds of pimeloyl-ACP esters.</text>
</comment>
<comment type="catalytic activity">
    <reaction evidence="2">
        <text>6-carboxyhexanoyl-[ACP] methyl ester + H2O = 6-carboxyhexanoyl-[ACP] + methanol + H(+)</text>
        <dbReference type="Rhea" id="RHEA:42700"/>
        <dbReference type="Rhea" id="RHEA-COMP:9955"/>
        <dbReference type="Rhea" id="RHEA-COMP:10186"/>
        <dbReference type="ChEBI" id="CHEBI:15377"/>
        <dbReference type="ChEBI" id="CHEBI:15378"/>
        <dbReference type="ChEBI" id="CHEBI:17790"/>
        <dbReference type="ChEBI" id="CHEBI:78846"/>
        <dbReference type="ChEBI" id="CHEBI:82735"/>
        <dbReference type="EC" id="3.1.1.85"/>
    </reaction>
</comment>
<comment type="pathway">
    <text evidence="2">Cofactor biosynthesis; biotin biosynthesis.</text>
</comment>
<comment type="subunit">
    <text evidence="2">Monomer.</text>
</comment>
<comment type="subcellular location">
    <subcellularLocation>
        <location evidence="2">Cytoplasm</location>
    </subcellularLocation>
</comment>
<comment type="similarity">
    <text evidence="2">Belongs to the AB hydrolase superfamily. Carboxylesterase BioH family.</text>
</comment>
<accession>B7M1W8</accession>
<organism>
    <name type="scientific">Escherichia coli O8 (strain IAI1)</name>
    <dbReference type="NCBI Taxonomy" id="585034"/>
    <lineage>
        <taxon>Bacteria</taxon>
        <taxon>Pseudomonadati</taxon>
        <taxon>Pseudomonadota</taxon>
        <taxon>Gammaproteobacteria</taxon>
        <taxon>Enterobacterales</taxon>
        <taxon>Enterobacteriaceae</taxon>
        <taxon>Escherichia</taxon>
    </lineage>
</organism>
<feature type="chain" id="PRO_1000139989" description="Pimeloyl-[acyl-carrier protein] methyl ester esterase">
    <location>
        <begin position="1"/>
        <end position="256"/>
    </location>
</feature>
<feature type="domain" description="AB hydrolase-1" evidence="1">
    <location>
        <begin position="15"/>
        <end position="242"/>
    </location>
</feature>
<feature type="active site" description="Nucleophile" evidence="2">
    <location>
        <position position="82"/>
    </location>
</feature>
<feature type="active site" evidence="2">
    <location>
        <position position="207"/>
    </location>
</feature>
<feature type="active site" evidence="2">
    <location>
        <position position="235"/>
    </location>
</feature>
<feature type="binding site" evidence="2">
    <location>
        <position position="22"/>
    </location>
    <ligand>
        <name>substrate</name>
    </ligand>
</feature>
<feature type="binding site" evidence="2">
    <location>
        <begin position="82"/>
        <end position="83"/>
    </location>
    <ligand>
        <name>substrate</name>
    </ligand>
</feature>
<feature type="binding site" evidence="2">
    <location>
        <begin position="143"/>
        <end position="147"/>
    </location>
    <ligand>
        <name>substrate</name>
    </ligand>
</feature>
<feature type="binding site" evidence="2">
    <location>
        <position position="235"/>
    </location>
    <ligand>
        <name>substrate</name>
    </ligand>
</feature>
<reference key="1">
    <citation type="journal article" date="2009" name="PLoS Genet.">
        <title>Organised genome dynamics in the Escherichia coli species results in highly diverse adaptive paths.</title>
        <authorList>
            <person name="Touchon M."/>
            <person name="Hoede C."/>
            <person name="Tenaillon O."/>
            <person name="Barbe V."/>
            <person name="Baeriswyl S."/>
            <person name="Bidet P."/>
            <person name="Bingen E."/>
            <person name="Bonacorsi S."/>
            <person name="Bouchier C."/>
            <person name="Bouvet O."/>
            <person name="Calteau A."/>
            <person name="Chiapello H."/>
            <person name="Clermont O."/>
            <person name="Cruveiller S."/>
            <person name="Danchin A."/>
            <person name="Diard M."/>
            <person name="Dossat C."/>
            <person name="Karoui M.E."/>
            <person name="Frapy E."/>
            <person name="Garry L."/>
            <person name="Ghigo J.M."/>
            <person name="Gilles A.M."/>
            <person name="Johnson J."/>
            <person name="Le Bouguenec C."/>
            <person name="Lescat M."/>
            <person name="Mangenot S."/>
            <person name="Martinez-Jehanne V."/>
            <person name="Matic I."/>
            <person name="Nassif X."/>
            <person name="Oztas S."/>
            <person name="Petit M.A."/>
            <person name="Pichon C."/>
            <person name="Rouy Z."/>
            <person name="Ruf C.S."/>
            <person name="Schneider D."/>
            <person name="Tourret J."/>
            <person name="Vacherie B."/>
            <person name="Vallenet D."/>
            <person name="Medigue C."/>
            <person name="Rocha E.P.C."/>
            <person name="Denamur E."/>
        </authorList>
    </citation>
    <scope>NUCLEOTIDE SEQUENCE [LARGE SCALE GENOMIC DNA]</scope>
    <source>
        <strain>IAI1</strain>
    </source>
</reference>
<proteinExistence type="inferred from homology"/>
<dbReference type="EC" id="3.1.1.85" evidence="2"/>
<dbReference type="EMBL" id="CU928160">
    <property type="protein sequence ID" value="CAR00355.1"/>
    <property type="molecule type" value="Genomic_DNA"/>
</dbReference>
<dbReference type="RefSeq" id="WP_001060071.1">
    <property type="nucleotide sequence ID" value="NC_011741.1"/>
</dbReference>
<dbReference type="SMR" id="B7M1W8"/>
<dbReference type="ESTHER" id="ecoli-bioh">
    <property type="family name" value="BioH"/>
</dbReference>
<dbReference type="MEROPS" id="S33.994"/>
<dbReference type="GeneID" id="75202255"/>
<dbReference type="KEGG" id="ecr:ECIAI1_3555"/>
<dbReference type="HOGENOM" id="CLU_020336_12_2_6"/>
<dbReference type="UniPathway" id="UPA00078"/>
<dbReference type="GO" id="GO:0005737">
    <property type="term" value="C:cytoplasm"/>
    <property type="evidence" value="ECO:0007669"/>
    <property type="project" value="UniProtKB-SubCell"/>
</dbReference>
<dbReference type="GO" id="GO:0090499">
    <property type="term" value="F:pimelyl-[acyl-carrier protein] methyl ester esterase activity"/>
    <property type="evidence" value="ECO:0007669"/>
    <property type="project" value="UniProtKB-EC"/>
</dbReference>
<dbReference type="GO" id="GO:0009102">
    <property type="term" value="P:biotin biosynthetic process"/>
    <property type="evidence" value="ECO:0007669"/>
    <property type="project" value="UniProtKB-UniRule"/>
</dbReference>
<dbReference type="FunFam" id="3.40.50.1820:FF:000045">
    <property type="entry name" value="Pimeloyl-[acyl-carrier protein] methyl ester esterase"/>
    <property type="match status" value="1"/>
</dbReference>
<dbReference type="Gene3D" id="3.40.50.1820">
    <property type="entry name" value="alpha/beta hydrolase"/>
    <property type="match status" value="1"/>
</dbReference>
<dbReference type="HAMAP" id="MF_01260">
    <property type="entry name" value="Carboxylester"/>
    <property type="match status" value="1"/>
</dbReference>
<dbReference type="InterPro" id="IPR000073">
    <property type="entry name" value="AB_hydrolase_1"/>
</dbReference>
<dbReference type="InterPro" id="IPR029058">
    <property type="entry name" value="AB_hydrolase_fold"/>
</dbReference>
<dbReference type="InterPro" id="IPR010076">
    <property type="entry name" value="BioH"/>
</dbReference>
<dbReference type="InterPro" id="IPR050228">
    <property type="entry name" value="Carboxylesterase_BioH"/>
</dbReference>
<dbReference type="NCBIfam" id="TIGR01738">
    <property type="entry name" value="bioH"/>
    <property type="match status" value="1"/>
</dbReference>
<dbReference type="NCBIfam" id="NF007674">
    <property type="entry name" value="PRK10349.1"/>
    <property type="match status" value="1"/>
</dbReference>
<dbReference type="PANTHER" id="PTHR43194">
    <property type="entry name" value="HYDROLASE ALPHA/BETA FOLD FAMILY"/>
    <property type="match status" value="1"/>
</dbReference>
<dbReference type="PANTHER" id="PTHR43194:SF5">
    <property type="entry name" value="PIMELOYL-[ACYL-CARRIER PROTEIN] METHYL ESTER ESTERASE"/>
    <property type="match status" value="1"/>
</dbReference>
<dbReference type="Pfam" id="PF00561">
    <property type="entry name" value="Abhydrolase_1"/>
    <property type="match status" value="1"/>
</dbReference>
<dbReference type="SUPFAM" id="SSF53474">
    <property type="entry name" value="alpha/beta-Hydrolases"/>
    <property type="match status" value="1"/>
</dbReference>
<gene>
    <name evidence="2" type="primary">bioH</name>
    <name type="ordered locus">ECIAI1_3555</name>
</gene>
<keyword id="KW-0093">Biotin biosynthesis</keyword>
<keyword id="KW-0963">Cytoplasm</keyword>
<keyword id="KW-0378">Hydrolase</keyword>
<keyword id="KW-0719">Serine esterase</keyword>
<protein>
    <recommendedName>
        <fullName evidence="2">Pimeloyl-[acyl-carrier protein] methyl ester esterase</fullName>
        <ecNumber evidence="2">3.1.1.85</ecNumber>
    </recommendedName>
    <alternativeName>
        <fullName evidence="2">Biotin synthesis protein BioH</fullName>
    </alternativeName>
    <alternativeName>
        <fullName evidence="2">Carboxylesterase BioH</fullName>
    </alternativeName>
</protein>
<evidence type="ECO:0000255" key="1"/>
<evidence type="ECO:0000255" key="2">
    <source>
        <dbReference type="HAMAP-Rule" id="MF_01260"/>
    </source>
</evidence>
<name>BIOH_ECO8A</name>